<protein>
    <recommendedName>
        <fullName evidence="4">Class I hydrophobin dewC</fullName>
    </recommendedName>
</protein>
<organism>
    <name type="scientific">Emericella nidulans (strain FGSC A4 / ATCC 38163 / CBS 112.46 / NRRL 194 / M139)</name>
    <name type="common">Aspergillus nidulans</name>
    <dbReference type="NCBI Taxonomy" id="227321"/>
    <lineage>
        <taxon>Eukaryota</taxon>
        <taxon>Fungi</taxon>
        <taxon>Dikarya</taxon>
        <taxon>Ascomycota</taxon>
        <taxon>Pezizomycotina</taxon>
        <taxon>Eurotiomycetes</taxon>
        <taxon>Eurotiomycetidae</taxon>
        <taxon>Eurotiales</taxon>
        <taxon>Aspergillaceae</taxon>
        <taxon>Aspergillus</taxon>
        <taxon>Aspergillus subgen. Nidulantes</taxon>
    </lineage>
</organism>
<feature type="signal peptide" evidence="2">
    <location>
        <begin position="1"/>
        <end position="21"/>
    </location>
</feature>
<feature type="chain" id="PRO_5041012552" description="Class I hydrophobin dewC">
    <location>
        <begin position="22"/>
        <end position="162"/>
    </location>
</feature>
<feature type="disulfide bond" evidence="1">
    <location>
        <begin position="43"/>
        <end position="119"/>
    </location>
</feature>
<feature type="disulfide bond" evidence="1">
    <location>
        <begin position="50"/>
        <end position="113"/>
    </location>
</feature>
<feature type="disulfide bond" evidence="1">
    <location>
        <begin position="51"/>
        <end position="90"/>
    </location>
</feature>
<feature type="disulfide bond" evidence="1">
    <location>
        <begin position="120"/>
        <end position="156"/>
    </location>
</feature>
<reference key="1">
    <citation type="journal article" date="2005" name="Nature">
        <title>Sequencing of Aspergillus nidulans and comparative analysis with A. fumigatus and A. oryzae.</title>
        <authorList>
            <person name="Galagan J.E."/>
            <person name="Calvo S.E."/>
            <person name="Cuomo C."/>
            <person name="Ma L.-J."/>
            <person name="Wortman J.R."/>
            <person name="Batzoglou S."/>
            <person name="Lee S.-I."/>
            <person name="Bastuerkmen M."/>
            <person name="Spevak C.C."/>
            <person name="Clutterbuck J."/>
            <person name="Kapitonov V."/>
            <person name="Jurka J."/>
            <person name="Scazzocchio C."/>
            <person name="Farman M.L."/>
            <person name="Butler J."/>
            <person name="Purcell S."/>
            <person name="Harris S."/>
            <person name="Braus G.H."/>
            <person name="Draht O."/>
            <person name="Busch S."/>
            <person name="D'Enfert C."/>
            <person name="Bouchier C."/>
            <person name="Goldman G.H."/>
            <person name="Bell-Pedersen D."/>
            <person name="Griffiths-Jones S."/>
            <person name="Doonan J.H."/>
            <person name="Yu J."/>
            <person name="Vienken K."/>
            <person name="Pain A."/>
            <person name="Freitag M."/>
            <person name="Selker E.U."/>
            <person name="Archer D.B."/>
            <person name="Penalva M.A."/>
            <person name="Oakley B.R."/>
            <person name="Momany M."/>
            <person name="Tanaka T."/>
            <person name="Kumagai T."/>
            <person name="Asai K."/>
            <person name="Machida M."/>
            <person name="Nierman W.C."/>
            <person name="Denning D.W."/>
            <person name="Caddick M.X."/>
            <person name="Hynes M."/>
            <person name="Paoletti M."/>
            <person name="Fischer R."/>
            <person name="Miller B.L."/>
            <person name="Dyer P.S."/>
            <person name="Sachs M.S."/>
            <person name="Osmani S.A."/>
            <person name="Birren B.W."/>
        </authorList>
    </citation>
    <scope>NUCLEOTIDE SEQUENCE [LARGE SCALE GENOMIC DNA]</scope>
    <source>
        <strain>FGSC A4 / ATCC 38163 / CBS 112.46 / NRRL 194 / M139</strain>
    </source>
</reference>
<reference key="2">
    <citation type="journal article" date="2009" name="Fungal Genet. Biol.">
        <title>The 2008 update of the Aspergillus nidulans genome annotation: a community effort.</title>
        <authorList>
            <person name="Wortman J.R."/>
            <person name="Gilsenan J.M."/>
            <person name="Joardar V."/>
            <person name="Deegan J."/>
            <person name="Clutterbuck J."/>
            <person name="Andersen M.R."/>
            <person name="Archer D."/>
            <person name="Bencina M."/>
            <person name="Braus G."/>
            <person name="Coutinho P."/>
            <person name="von Dohren H."/>
            <person name="Doonan J."/>
            <person name="Driessen A.J."/>
            <person name="Durek P."/>
            <person name="Espeso E."/>
            <person name="Fekete E."/>
            <person name="Flipphi M."/>
            <person name="Estrada C.G."/>
            <person name="Geysens S."/>
            <person name="Goldman G."/>
            <person name="de Groot P.W."/>
            <person name="Hansen K."/>
            <person name="Harris S.D."/>
            <person name="Heinekamp T."/>
            <person name="Helmstaedt K."/>
            <person name="Henrissat B."/>
            <person name="Hofmann G."/>
            <person name="Homan T."/>
            <person name="Horio T."/>
            <person name="Horiuchi H."/>
            <person name="James S."/>
            <person name="Jones M."/>
            <person name="Karaffa L."/>
            <person name="Karanyi Z."/>
            <person name="Kato M."/>
            <person name="Keller N."/>
            <person name="Kelly D.E."/>
            <person name="Kiel J.A."/>
            <person name="Kim J.M."/>
            <person name="van der Klei I.J."/>
            <person name="Klis F.M."/>
            <person name="Kovalchuk A."/>
            <person name="Krasevec N."/>
            <person name="Kubicek C.P."/>
            <person name="Liu B."/>
            <person name="Maccabe A."/>
            <person name="Meyer V."/>
            <person name="Mirabito P."/>
            <person name="Miskei M."/>
            <person name="Mos M."/>
            <person name="Mullins J."/>
            <person name="Nelson D.R."/>
            <person name="Nielsen J."/>
            <person name="Oakley B.R."/>
            <person name="Osmani S.A."/>
            <person name="Pakula T."/>
            <person name="Paszewski A."/>
            <person name="Paulsen I."/>
            <person name="Pilsyk S."/>
            <person name="Pocsi I."/>
            <person name="Punt P.J."/>
            <person name="Ram A.F."/>
            <person name="Ren Q."/>
            <person name="Robellet X."/>
            <person name="Robson G."/>
            <person name="Seiboth B."/>
            <person name="van Solingen P."/>
            <person name="Specht T."/>
            <person name="Sun J."/>
            <person name="Taheri-Talesh N."/>
            <person name="Takeshita N."/>
            <person name="Ussery D."/>
            <person name="vanKuyk P.A."/>
            <person name="Visser H."/>
            <person name="van de Vondervoort P.J."/>
            <person name="de Vries R.P."/>
            <person name="Walton J."/>
            <person name="Xiang X."/>
            <person name="Xiong Y."/>
            <person name="Zeng A.P."/>
            <person name="Brandt B.W."/>
            <person name="Cornell M.J."/>
            <person name="van den Hondel C.A."/>
            <person name="Visser J."/>
            <person name="Oliver S.G."/>
            <person name="Turner G."/>
        </authorList>
    </citation>
    <scope>GENOME REANNOTATION</scope>
    <source>
        <strain>FGSC A4 / ATCC 38163 / CBS 112.46 / NRRL 194 / M139</strain>
    </source>
</reference>
<reference key="3">
    <citation type="journal article" date="2014" name="PLoS ONE">
        <title>Six hydrophobins are involved in hydrophobin rodlet formation in Aspergillus nidulans and contribute to hydrophobicity of the spore surface.</title>
        <authorList>
            <person name="Gruenbacher A."/>
            <person name="Throm T."/>
            <person name="Seidel C."/>
            <person name="Gutt B."/>
            <person name="Roehrig J."/>
            <person name="Strunk T."/>
            <person name="Vincze P."/>
            <person name="Walheim S."/>
            <person name="Schimmel T."/>
            <person name="Wenzel W."/>
            <person name="Fischer R."/>
        </authorList>
    </citation>
    <scope>FUNCTION</scope>
    <scope>SUBUNIT</scope>
    <scope>INDUCTION</scope>
    <scope>SUBCELLULAR LOCATION</scope>
</reference>
<dbReference type="EMBL" id="BN001301">
    <property type="protein sequence ID" value="CBF69542.1"/>
    <property type="molecule type" value="Genomic_DNA"/>
</dbReference>
<dbReference type="RefSeq" id="XP_664005.1">
    <property type="nucleotide sequence ID" value="XM_658913.1"/>
</dbReference>
<dbReference type="EnsemblFungi" id="CBF69542">
    <property type="protein sequence ID" value="CBF69542"/>
    <property type="gene ID" value="ANIA_06401"/>
</dbReference>
<dbReference type="GeneID" id="2871299"/>
<dbReference type="KEGG" id="ani:ANIA_06401"/>
<dbReference type="HOGENOM" id="CLU_1635360_0_0_1"/>
<dbReference type="InParanoid" id="Q5AZ79"/>
<dbReference type="OMA" id="ACCNAGD"/>
<dbReference type="OrthoDB" id="4501659at2759"/>
<dbReference type="Proteomes" id="UP000000560">
    <property type="component" value="Chromosome I"/>
</dbReference>
<dbReference type="GO" id="GO:0005576">
    <property type="term" value="C:extracellular region"/>
    <property type="evidence" value="ECO:0007669"/>
    <property type="project" value="UniProtKB-KW"/>
</dbReference>
<dbReference type="GO" id="GO:0009277">
    <property type="term" value="C:fungal-type cell wall"/>
    <property type="evidence" value="ECO:0007669"/>
    <property type="project" value="InterPro"/>
</dbReference>
<dbReference type="GO" id="GO:0005199">
    <property type="term" value="F:structural constituent of cell wall"/>
    <property type="evidence" value="ECO:0007669"/>
    <property type="project" value="InterPro"/>
</dbReference>
<dbReference type="InterPro" id="IPR001338">
    <property type="entry name" value="Hydrophobin"/>
</dbReference>
<dbReference type="Pfam" id="PF01185">
    <property type="entry name" value="Hydrophobin"/>
    <property type="match status" value="1"/>
</dbReference>
<accession>Q5AZ79</accession>
<accession>C8V0N5</accession>
<gene>
    <name evidence="4" type="primary">dewC</name>
    <name type="ORF">ANIA_06401</name>
</gene>
<proteinExistence type="evidence at protein level"/>
<keyword id="KW-0183">Conidiation</keyword>
<keyword id="KW-1015">Disulfide bond</keyword>
<keyword id="KW-1185">Reference proteome</keyword>
<keyword id="KW-0964">Secreted</keyword>
<keyword id="KW-0732">Signal</keyword>
<keyword id="KW-0749">Sporulation</keyword>
<evidence type="ECO:0000250" key="1">
    <source>
        <dbReference type="UniProtKB" id="Q04571"/>
    </source>
</evidence>
<evidence type="ECO:0000255" key="2"/>
<evidence type="ECO:0000269" key="3">
    <source>
    </source>
</evidence>
<evidence type="ECO:0000303" key="4">
    <source>
    </source>
</evidence>
<evidence type="ECO:0000305" key="5"/>
<name>DEWC_EMENI</name>
<sequence>MQFTIASLIATAVLGLQMASAAPHAPGSSNAAIISQAQEQNTCGNAHLSCCESTDNSVSLTQEEEEGLLHLLGGTSSVLSDGLLGKYSGCSSLASVEGILGAGGNQGLVSGQCNNHVACCDAGDNELVGFLEPGVAVLKPNSDGIQNGLANVAVPCVPVQVL</sequence>
<comment type="function">
    <text evidence="3 5">Aerial growth, conidiation, and dispersal of filamentous fungi in the environment rely upon a capability of their secreting small amphipathic proteins called hydrophobins (HPBs) with low sequence identity. Class I can self-assemble into an outermost layer of rodlet bundles on aerial cell surfaces, conferring cellular hydrophobicity that supports fungal growth, development and dispersal; whereas Class II form highly ordered films at water-air interfaces through intermolecular interactions but contribute nothing to the rodlet structure (Probable). DewC is a class I hydrophobin that contributes to the hydrophobicity of the spore surface (PubMed:24722460).</text>
</comment>
<comment type="subunit">
    <text evidence="3">Self-assembles to form functional amyloid fibrils called rodlets. Self-assembly into fibrillar rodlets occurs spontaneously at hydrophobic:hydrophilic interfaces and the rodlets further associate laterally to form amphipathic monolayers.</text>
</comment>
<comment type="subcellular location">
    <subcellularLocation>
        <location evidence="3">Secreted</location>
    </subcellularLocation>
    <subcellularLocation>
        <location evidence="3">Spore wall</location>
    </subcellularLocation>
</comment>
<comment type="induction">
    <text evidence="3">Expressed after 12 to 24 hours post induction of asexual development, which correlates with the development of metulae and phialides (PubMed:24722460). Not expressed in hyphae and strongly induced during development (PubMed:24722460).</text>
</comment>
<comment type="similarity">
    <text evidence="5">Belongs to the fungal hydrophobin family.</text>
</comment>